<name>MPK7_ARATH</name>
<reference key="1">
    <citation type="journal article" date="1993" name="FEBS Lett.">
        <title>ATMPKs: a gene family of plant MAP kinases in Arabidopsis thaliana.</title>
        <authorList>
            <person name="Mizoguchi T."/>
            <person name="Hayashida N."/>
            <person name="Yamaguchi-Shinozaki K."/>
            <person name="Kamada H."/>
            <person name="Shinozaki K."/>
        </authorList>
    </citation>
    <scope>NUCLEOTIDE SEQUENCE [MRNA]</scope>
    <source>
        <strain>cv. Columbia</strain>
    </source>
</reference>
<reference key="2">
    <citation type="journal article" date="1999" name="Nature">
        <title>Sequence and analysis of chromosome 2 of the plant Arabidopsis thaliana.</title>
        <authorList>
            <person name="Lin X."/>
            <person name="Kaul S."/>
            <person name="Rounsley S.D."/>
            <person name="Shea T.P."/>
            <person name="Benito M.-I."/>
            <person name="Town C.D."/>
            <person name="Fujii C.Y."/>
            <person name="Mason T.M."/>
            <person name="Bowman C.L."/>
            <person name="Barnstead M.E."/>
            <person name="Feldblyum T.V."/>
            <person name="Buell C.R."/>
            <person name="Ketchum K.A."/>
            <person name="Lee J.J."/>
            <person name="Ronning C.M."/>
            <person name="Koo H.L."/>
            <person name="Moffat K.S."/>
            <person name="Cronin L.A."/>
            <person name="Shen M."/>
            <person name="Pai G."/>
            <person name="Van Aken S."/>
            <person name="Umayam L."/>
            <person name="Tallon L.J."/>
            <person name="Gill J.E."/>
            <person name="Adams M.D."/>
            <person name="Carrera A.J."/>
            <person name="Creasy T.H."/>
            <person name="Goodman H.M."/>
            <person name="Somerville C.R."/>
            <person name="Copenhaver G.P."/>
            <person name="Preuss D."/>
            <person name="Nierman W.C."/>
            <person name="White O."/>
            <person name="Eisen J.A."/>
            <person name="Salzberg S.L."/>
            <person name="Fraser C.M."/>
            <person name="Venter J.C."/>
        </authorList>
    </citation>
    <scope>NUCLEOTIDE SEQUENCE [LARGE SCALE GENOMIC DNA]</scope>
    <source>
        <strain>cv. Columbia</strain>
    </source>
</reference>
<reference key="3">
    <citation type="journal article" date="2017" name="Plant J.">
        <title>Araport11: a complete reannotation of the Arabidopsis thaliana reference genome.</title>
        <authorList>
            <person name="Cheng C.Y."/>
            <person name="Krishnakumar V."/>
            <person name="Chan A.P."/>
            <person name="Thibaud-Nissen F."/>
            <person name="Schobel S."/>
            <person name="Town C.D."/>
        </authorList>
    </citation>
    <scope>GENOME REANNOTATION</scope>
    <source>
        <strain>cv. Columbia</strain>
    </source>
</reference>
<reference key="4">
    <citation type="submission" date="2005-03" db="EMBL/GenBank/DDBJ databases">
        <title>Large-scale analysis of RIKEN Arabidopsis full-length (RAFL) cDNAs.</title>
        <authorList>
            <person name="Totoki Y."/>
            <person name="Seki M."/>
            <person name="Ishida J."/>
            <person name="Nakajima M."/>
            <person name="Enju A."/>
            <person name="Kamiya A."/>
            <person name="Narusaka M."/>
            <person name="Shin-i T."/>
            <person name="Nakagawa M."/>
            <person name="Sakamoto N."/>
            <person name="Oishi K."/>
            <person name="Kohara Y."/>
            <person name="Kobayashi M."/>
            <person name="Toyoda A."/>
            <person name="Sakaki Y."/>
            <person name="Sakurai T."/>
            <person name="Iida K."/>
            <person name="Akiyama K."/>
            <person name="Satou M."/>
            <person name="Toyoda T."/>
            <person name="Konagaya A."/>
            <person name="Carninci P."/>
            <person name="Kawai J."/>
            <person name="Hayashizaki Y."/>
            <person name="Shinozaki K."/>
        </authorList>
    </citation>
    <scope>NUCLEOTIDE SEQUENCE [LARGE SCALE MRNA]</scope>
    <source>
        <strain>cv. Columbia</strain>
    </source>
</reference>
<reference key="5">
    <citation type="journal article" date="2002" name="Trends Plant Sci.">
        <title>Mitogen-activated protein kinase cascades in plants: a new nomenclature.</title>
        <authorList>
            <consortium name="MAPK group"/>
        </authorList>
    </citation>
    <scope>GENE FAMILY</scope>
    <scope>NOMENCLATURE</scope>
</reference>
<reference key="6">
    <citation type="journal article" date="2006" name="Trends Plant Sci.">
        <title>Ancient signals: comparative genomics of plant MAPK and MAPKK gene families.</title>
        <authorList>
            <person name="Hamel L.P."/>
            <person name="Nicole M.C."/>
            <person name="Sritubtim S."/>
            <person name="Morency M.J."/>
            <person name="Ellis M."/>
            <person name="Ehlting J."/>
            <person name="Beaudoin N."/>
            <person name="Barbazuk B."/>
            <person name="Klessig D."/>
            <person name="Lee J."/>
            <person name="Martin G."/>
            <person name="Mundy J."/>
            <person name="Ohashi Y."/>
            <person name="Scheel D."/>
            <person name="Sheen J."/>
            <person name="Xing T."/>
            <person name="Zhang S."/>
            <person name="Seguin A."/>
            <person name="Ellis B.E."/>
        </authorList>
    </citation>
    <scope>GENE FAMILY</scope>
</reference>
<reference key="7">
    <citation type="journal article" date="2007" name="Plant Cell">
        <title>The Arabidopsis mitogen-activated protein kinase kinase MKK3 is upstream of group C mitogen-activated protein kinases and participates in pathogen signaling.</title>
        <authorList>
            <person name="Doczi R."/>
            <person name="Brader G."/>
            <person name="Pettko-Szandtner A."/>
            <person name="Rajh I."/>
            <person name="Djamei A."/>
            <person name="Pitzschke A."/>
            <person name="Teige M."/>
            <person name="Hirt H."/>
        </authorList>
    </citation>
    <scope>INTERACTION WITH MKK3</scope>
    <scope>ACTIVITY REGULATION</scope>
    <scope>FUNCTION</scope>
</reference>
<reference key="8">
    <citation type="journal article" date="2008" name="Plant Signal. Behav.">
        <title>Comprehensive analysis of protein-protein interactions between Arabidopsis MAPKs and MAPK kinases helps define potential MAPK signalling modules.</title>
        <authorList>
            <person name="Lee J.S."/>
            <person name="Huh K.W."/>
            <person name="Bhargava A."/>
            <person name="Ellis B.E."/>
        </authorList>
    </citation>
    <scope>INTERACTION WITH MKK3</scope>
</reference>
<reference key="9">
    <citation type="journal article" date="2015" name="Plant J.">
        <title>Identification and characterization of an ABA-activated MAP kinase cascade in Arabidopsis thaliana.</title>
        <authorList>
            <person name="Danquah A."/>
            <person name="de Zelicourt A."/>
            <person name="Boudsocq M."/>
            <person name="Neubauer J."/>
            <person name="Frei Dit Frey N."/>
            <person name="Leonhardt N."/>
            <person name="Pateyron S."/>
            <person name="Gwinner F."/>
            <person name="Tamby J.P."/>
            <person name="Ortiz-Masia D."/>
            <person name="Marcote M.J."/>
            <person name="Hirt H."/>
            <person name="Colcombet J."/>
        </authorList>
    </citation>
    <scope>ACTIVITY REGULATION</scope>
    <source>
        <strain>cv. Columbia</strain>
    </source>
</reference>
<reference key="10">
    <citation type="journal article" date="2015" name="Plant Mol. Biol.">
        <title>An abscisic acid inducible Arabidopsis MAPKKK, MAPKKK18 regulates leaf senescence via its kinase activity.</title>
        <authorList>
            <person name="Matsuoka D."/>
            <person name="Yasufuku T."/>
            <person name="Furuya T."/>
            <person name="Nanmori T."/>
        </authorList>
    </citation>
    <scope>INTERACTION WITH MKK3</scope>
    <source>
        <strain>cv. Columbia</strain>
    </source>
</reference>
<protein>
    <recommendedName>
        <fullName>Mitogen-activated protein kinase 7</fullName>
        <shortName>AtMPK7</shortName>
        <shortName>MAP kinase 7</shortName>
        <ecNumber>2.7.11.24</ecNumber>
    </recommendedName>
</protein>
<organism>
    <name type="scientific">Arabidopsis thaliana</name>
    <name type="common">Mouse-ear cress</name>
    <dbReference type="NCBI Taxonomy" id="3702"/>
    <lineage>
        <taxon>Eukaryota</taxon>
        <taxon>Viridiplantae</taxon>
        <taxon>Streptophyta</taxon>
        <taxon>Embryophyta</taxon>
        <taxon>Tracheophyta</taxon>
        <taxon>Spermatophyta</taxon>
        <taxon>Magnoliopsida</taxon>
        <taxon>eudicotyledons</taxon>
        <taxon>Gunneridae</taxon>
        <taxon>Pentapetalae</taxon>
        <taxon>rosids</taxon>
        <taxon>malvids</taxon>
        <taxon>Brassicales</taxon>
        <taxon>Brassicaceae</taxon>
        <taxon>Camelineae</taxon>
        <taxon>Arabidopsis</taxon>
    </lineage>
</organism>
<accession>Q39027</accession>
<accession>Q56W33</accession>
<accession>Q9SI14</accession>
<feature type="chain" id="PRO_0000186316" description="Mitogen-activated protein kinase 7">
    <location>
        <begin position="1"/>
        <end position="368"/>
    </location>
</feature>
<feature type="domain" description="Protein kinase" evidence="3">
    <location>
        <begin position="32"/>
        <end position="319"/>
    </location>
</feature>
<feature type="short sequence motif" description="TXY">
    <location>
        <begin position="191"/>
        <end position="193"/>
    </location>
</feature>
<feature type="active site" description="Proton acceptor" evidence="3 4">
    <location>
        <position position="158"/>
    </location>
</feature>
<feature type="binding site" evidence="3">
    <location>
        <begin position="38"/>
        <end position="46"/>
    </location>
    <ligand>
        <name>ATP</name>
        <dbReference type="ChEBI" id="CHEBI:30616"/>
    </ligand>
</feature>
<feature type="binding site" evidence="3">
    <location>
        <position position="61"/>
    </location>
    <ligand>
        <name>ATP</name>
        <dbReference type="ChEBI" id="CHEBI:30616"/>
    </ligand>
</feature>
<feature type="modified residue" description="Phosphothreonine" evidence="2">
    <location>
        <position position="191"/>
    </location>
</feature>
<feature type="modified residue" description="Phosphotyrosine" evidence="2">
    <location>
        <position position="193"/>
    </location>
</feature>
<feature type="modified residue" description="Phosphothreonine" evidence="2">
    <location>
        <position position="196"/>
    </location>
</feature>
<feature type="sequence conflict" description="In Ref. 1; BAA04870." evidence="9" ref="1">
    <original>S</original>
    <variation>T</variation>
    <location>
        <position position="104"/>
    </location>
</feature>
<feature type="sequence conflict" description="In Ref. 1; BAA04870." evidence="9" ref="1">
    <original>D</original>
    <variation>E</variation>
    <location>
        <position position="303"/>
    </location>
</feature>
<feature type="sequence conflict" description="In Ref. 1; BAA04870." evidence="9" ref="1">
    <original>D</original>
    <variation>E</variation>
    <location>
        <position position="324"/>
    </location>
</feature>
<feature type="sequence conflict" description="In Ref. 1; BAA04870." evidence="9" ref="1">
    <original>S</original>
    <variation>T</variation>
    <location>
        <position position="327"/>
    </location>
</feature>
<feature type="sequence conflict" description="In Ref. 1; BAA04870." evidence="9" ref="1">
    <original>S</original>
    <variation>L</variation>
    <location>
        <position position="366"/>
    </location>
</feature>
<evidence type="ECO:0000250" key="1"/>
<evidence type="ECO:0000250" key="2">
    <source>
        <dbReference type="UniProtKB" id="Q39026"/>
    </source>
</evidence>
<evidence type="ECO:0000255" key="3">
    <source>
        <dbReference type="PROSITE-ProRule" id="PRU00159"/>
    </source>
</evidence>
<evidence type="ECO:0000255" key="4">
    <source>
        <dbReference type="PROSITE-ProRule" id="PRU10027"/>
    </source>
</evidence>
<evidence type="ECO:0000269" key="5">
    <source>
    </source>
</evidence>
<evidence type="ECO:0000269" key="6">
    <source>
    </source>
</evidence>
<evidence type="ECO:0000269" key="7">
    <source>
    </source>
</evidence>
<evidence type="ECO:0000269" key="8">
    <source>
    </source>
</evidence>
<evidence type="ECO:0000305" key="9"/>
<proteinExistence type="evidence at protein level"/>
<sequence>MAMLVEPPNGIKQQGKHYYSMWQTLFEIDTKYVPIKPIGRGAYGVVCSSINRETNERVAIKKIHNVFENRVDALRTLRELKLLRHVRHENVIALKDVMLPANRSSFKDVYLVYELMDTDLHQIIKSSQSLSDDHCKYFLFQLLRGLKYLHSANILHRDLKPGNLLVNANCDLKICDFGLARTSQGNEQFMTEYVVTRWYRAPELLLCCDNYGTSIDVWSVGCIFAEILGRKPIFPGTECLNQLKLIINVVGSQQESDIRFIDNPKARRFIKSLPYSRGTHLSNLYPQANPLAIDLLQRMLVFDPTKRISVTDALLHPYMAGLFDPGSNPPAHVPISLDIDENMEEPVIREMMWNEMLYYHPEAEISNA</sequence>
<keyword id="KW-0067">ATP-binding</keyword>
<keyword id="KW-0418">Kinase</keyword>
<keyword id="KW-0547">Nucleotide-binding</keyword>
<keyword id="KW-0597">Phosphoprotein</keyword>
<keyword id="KW-0611">Plant defense</keyword>
<keyword id="KW-1185">Reference proteome</keyword>
<keyword id="KW-0723">Serine/threonine-protein kinase</keyword>
<keyword id="KW-0808">Transferase</keyword>
<comment type="function">
    <text evidence="5">MKK3-MPK7 module acts as a positive regulator of PR1 gene expression.</text>
</comment>
<comment type="catalytic activity">
    <reaction>
        <text>L-seryl-[protein] + ATP = O-phospho-L-seryl-[protein] + ADP + H(+)</text>
        <dbReference type="Rhea" id="RHEA:17989"/>
        <dbReference type="Rhea" id="RHEA-COMP:9863"/>
        <dbReference type="Rhea" id="RHEA-COMP:11604"/>
        <dbReference type="ChEBI" id="CHEBI:15378"/>
        <dbReference type="ChEBI" id="CHEBI:29999"/>
        <dbReference type="ChEBI" id="CHEBI:30616"/>
        <dbReference type="ChEBI" id="CHEBI:83421"/>
        <dbReference type="ChEBI" id="CHEBI:456216"/>
        <dbReference type="EC" id="2.7.11.24"/>
    </reaction>
</comment>
<comment type="catalytic activity">
    <reaction>
        <text>L-threonyl-[protein] + ATP = O-phospho-L-threonyl-[protein] + ADP + H(+)</text>
        <dbReference type="Rhea" id="RHEA:46608"/>
        <dbReference type="Rhea" id="RHEA-COMP:11060"/>
        <dbReference type="Rhea" id="RHEA-COMP:11605"/>
        <dbReference type="ChEBI" id="CHEBI:15378"/>
        <dbReference type="ChEBI" id="CHEBI:30013"/>
        <dbReference type="ChEBI" id="CHEBI:30616"/>
        <dbReference type="ChEBI" id="CHEBI:61977"/>
        <dbReference type="ChEBI" id="CHEBI:456216"/>
        <dbReference type="EC" id="2.7.11.24"/>
    </reaction>
</comment>
<comment type="cofactor">
    <cofactor evidence="1">
        <name>Mg(2+)</name>
        <dbReference type="ChEBI" id="CHEBI:18420"/>
    </cofactor>
</comment>
<comment type="activity regulation">
    <text evidence="1 5 8">Activated by threonine and tyrosine phosphorylation (By similarity). Activated in response to hydrogen peroxide. Activation is triggered by MAPKKK17 and MAPKKK18 in a MKK3-dependent manner (PubMed:25720833).</text>
</comment>
<comment type="subunit">
    <text evidence="5 6 7">Interacts with MKK3.</text>
</comment>
<comment type="domain">
    <text>The TXY motif contains the threonine and tyrosine residues whose phosphorylation activates the MAP kinases.</text>
</comment>
<comment type="PTM">
    <text evidence="1">Dually phosphorylated on Thr-191 and Tyr-193, which activates the enzyme.</text>
</comment>
<comment type="similarity">
    <text evidence="9">Belongs to the protein kinase superfamily. CMGC Ser/Thr protein kinase family. MAP kinase subfamily.</text>
</comment>
<comment type="sequence caution" evidence="9">
    <conflict type="frameshift">
        <sequence resource="EMBL-CDS" id="BAD95376"/>
    </conflict>
</comment>
<dbReference type="EC" id="2.7.11.24"/>
<dbReference type="EMBL" id="D21843">
    <property type="protein sequence ID" value="BAA04870.1"/>
    <property type="molecule type" value="mRNA"/>
</dbReference>
<dbReference type="EMBL" id="AC007212">
    <property type="protein sequence ID" value="AAD31349.1"/>
    <property type="molecule type" value="Genomic_DNA"/>
</dbReference>
<dbReference type="EMBL" id="CP002685">
    <property type="protein sequence ID" value="AEC06734.1"/>
    <property type="molecule type" value="Genomic_DNA"/>
</dbReference>
<dbReference type="EMBL" id="AK222214">
    <property type="protein sequence ID" value="BAD95376.1"/>
    <property type="status" value="ALT_FRAME"/>
    <property type="molecule type" value="mRNA"/>
</dbReference>
<dbReference type="PIR" id="B84561">
    <property type="entry name" value="B84561"/>
</dbReference>
<dbReference type="PIR" id="S40473">
    <property type="entry name" value="S40473"/>
</dbReference>
<dbReference type="RefSeq" id="NP_179409.1">
    <property type="nucleotide sequence ID" value="NM_127374.4"/>
</dbReference>
<dbReference type="SMR" id="Q39027"/>
<dbReference type="BioGRID" id="1687">
    <property type="interactions" value="100"/>
</dbReference>
<dbReference type="FunCoup" id="Q39027">
    <property type="interactions" value="2481"/>
</dbReference>
<dbReference type="IntAct" id="Q39027">
    <property type="interactions" value="3"/>
</dbReference>
<dbReference type="STRING" id="3702.Q39027"/>
<dbReference type="iPTMnet" id="Q39027"/>
<dbReference type="PaxDb" id="3702-AT2G18170.1"/>
<dbReference type="ProteomicsDB" id="238274"/>
<dbReference type="EnsemblPlants" id="AT2G18170.1">
    <property type="protein sequence ID" value="AT2G18170.1"/>
    <property type="gene ID" value="AT2G18170"/>
</dbReference>
<dbReference type="GeneID" id="816330"/>
<dbReference type="Gramene" id="AT2G18170.1">
    <property type="protein sequence ID" value="AT2G18170.1"/>
    <property type="gene ID" value="AT2G18170"/>
</dbReference>
<dbReference type="KEGG" id="ath:AT2G18170"/>
<dbReference type="Araport" id="AT2G18170"/>
<dbReference type="TAIR" id="AT2G18170">
    <property type="gene designation" value="MPK7"/>
</dbReference>
<dbReference type="eggNOG" id="KOG0660">
    <property type="taxonomic scope" value="Eukaryota"/>
</dbReference>
<dbReference type="HOGENOM" id="CLU_000288_181_1_1"/>
<dbReference type="InParanoid" id="Q39027"/>
<dbReference type="OMA" id="GCRNILR"/>
<dbReference type="PhylomeDB" id="Q39027"/>
<dbReference type="BRENDA" id="2.7.11.24">
    <property type="organism ID" value="399"/>
</dbReference>
<dbReference type="PRO" id="PR:Q39027"/>
<dbReference type="Proteomes" id="UP000006548">
    <property type="component" value="Chromosome 2"/>
</dbReference>
<dbReference type="ExpressionAtlas" id="Q39027">
    <property type="expression patterns" value="baseline and differential"/>
</dbReference>
<dbReference type="GO" id="GO:0005524">
    <property type="term" value="F:ATP binding"/>
    <property type="evidence" value="ECO:0007669"/>
    <property type="project" value="UniProtKB-KW"/>
</dbReference>
<dbReference type="GO" id="GO:0004707">
    <property type="term" value="F:MAP kinase activity"/>
    <property type="evidence" value="ECO:0000250"/>
    <property type="project" value="TAIR"/>
</dbReference>
<dbReference type="GO" id="GO:0106310">
    <property type="term" value="F:protein serine kinase activity"/>
    <property type="evidence" value="ECO:0007669"/>
    <property type="project" value="RHEA"/>
</dbReference>
<dbReference type="GO" id="GO:0006952">
    <property type="term" value="P:defense response"/>
    <property type="evidence" value="ECO:0007669"/>
    <property type="project" value="UniProtKB-KW"/>
</dbReference>
<dbReference type="GO" id="GO:0042542">
    <property type="term" value="P:response to hydrogen peroxide"/>
    <property type="evidence" value="ECO:0000314"/>
    <property type="project" value="TAIR"/>
</dbReference>
<dbReference type="CDD" id="cd07858">
    <property type="entry name" value="STKc_TEY_MAPK"/>
    <property type="match status" value="1"/>
</dbReference>
<dbReference type="FunFam" id="1.10.510.10:FF:000206">
    <property type="entry name" value="Mitogen-activated protein kinase"/>
    <property type="match status" value="1"/>
</dbReference>
<dbReference type="FunFam" id="3.30.200.20:FF:000046">
    <property type="entry name" value="Mitogen-activated protein kinase"/>
    <property type="match status" value="1"/>
</dbReference>
<dbReference type="Gene3D" id="3.30.200.20">
    <property type="entry name" value="Phosphorylase Kinase, domain 1"/>
    <property type="match status" value="1"/>
</dbReference>
<dbReference type="Gene3D" id="1.10.510.10">
    <property type="entry name" value="Transferase(Phosphotransferase) domain 1"/>
    <property type="match status" value="1"/>
</dbReference>
<dbReference type="InterPro" id="IPR011009">
    <property type="entry name" value="Kinase-like_dom_sf"/>
</dbReference>
<dbReference type="InterPro" id="IPR050117">
    <property type="entry name" value="MAP_kinase"/>
</dbReference>
<dbReference type="InterPro" id="IPR003527">
    <property type="entry name" value="MAP_kinase_CS"/>
</dbReference>
<dbReference type="InterPro" id="IPR000719">
    <property type="entry name" value="Prot_kinase_dom"/>
</dbReference>
<dbReference type="InterPro" id="IPR017441">
    <property type="entry name" value="Protein_kinase_ATP_BS"/>
</dbReference>
<dbReference type="InterPro" id="IPR008271">
    <property type="entry name" value="Ser/Thr_kinase_AS"/>
</dbReference>
<dbReference type="PANTHER" id="PTHR24055">
    <property type="entry name" value="MITOGEN-ACTIVATED PROTEIN KINASE"/>
    <property type="match status" value="1"/>
</dbReference>
<dbReference type="Pfam" id="PF00069">
    <property type="entry name" value="Pkinase"/>
    <property type="match status" value="1"/>
</dbReference>
<dbReference type="SMART" id="SM00220">
    <property type="entry name" value="S_TKc"/>
    <property type="match status" value="1"/>
</dbReference>
<dbReference type="SUPFAM" id="SSF56112">
    <property type="entry name" value="Protein kinase-like (PK-like)"/>
    <property type="match status" value="1"/>
</dbReference>
<dbReference type="PROSITE" id="PS01351">
    <property type="entry name" value="MAPK"/>
    <property type="match status" value="1"/>
</dbReference>
<dbReference type="PROSITE" id="PS00107">
    <property type="entry name" value="PROTEIN_KINASE_ATP"/>
    <property type="match status" value="1"/>
</dbReference>
<dbReference type="PROSITE" id="PS50011">
    <property type="entry name" value="PROTEIN_KINASE_DOM"/>
    <property type="match status" value="1"/>
</dbReference>
<dbReference type="PROSITE" id="PS00108">
    <property type="entry name" value="PROTEIN_KINASE_ST"/>
    <property type="match status" value="1"/>
</dbReference>
<gene>
    <name type="primary">MPK7</name>
    <name type="ordered locus">At2g18170</name>
    <name type="ORF">F8D23</name>
</gene>